<organism>
    <name type="scientific">Magnetococcus marinus (strain ATCC BAA-1437 / JCM 17883 / MC-1)</name>
    <dbReference type="NCBI Taxonomy" id="156889"/>
    <lineage>
        <taxon>Bacteria</taxon>
        <taxon>Pseudomonadati</taxon>
        <taxon>Pseudomonadota</taxon>
        <taxon>Alphaproteobacteria</taxon>
        <taxon>Magnetococcales</taxon>
        <taxon>Magnetococcaceae</taxon>
        <taxon>Magnetococcus</taxon>
    </lineage>
</organism>
<reference key="1">
    <citation type="journal article" date="2009" name="Appl. Environ. Microbiol.">
        <title>Complete genome sequence of the chemolithoautotrophic marine magnetotactic coccus strain MC-1.</title>
        <authorList>
            <person name="Schubbe S."/>
            <person name="Williams T.J."/>
            <person name="Xie G."/>
            <person name="Kiss H.E."/>
            <person name="Brettin T.S."/>
            <person name="Martinez D."/>
            <person name="Ross C.A."/>
            <person name="Schuler D."/>
            <person name="Cox B.L."/>
            <person name="Nealson K.H."/>
            <person name="Bazylinski D.A."/>
        </authorList>
    </citation>
    <scope>NUCLEOTIDE SEQUENCE [LARGE SCALE GENOMIC DNA]</scope>
    <source>
        <strain>ATCC BAA-1437 / JCM 17883 / MC-1</strain>
    </source>
</reference>
<comment type="function">
    <text evidence="2">Catalyzes the formation of N(7)-methylguanine at position 46 (m7G46) in tRNA.</text>
</comment>
<comment type="catalytic activity">
    <reaction evidence="2">
        <text>guanosine(46) in tRNA + S-adenosyl-L-methionine = N(7)-methylguanosine(46) in tRNA + S-adenosyl-L-homocysteine</text>
        <dbReference type="Rhea" id="RHEA:42708"/>
        <dbReference type="Rhea" id="RHEA-COMP:10188"/>
        <dbReference type="Rhea" id="RHEA-COMP:10189"/>
        <dbReference type="ChEBI" id="CHEBI:57856"/>
        <dbReference type="ChEBI" id="CHEBI:59789"/>
        <dbReference type="ChEBI" id="CHEBI:74269"/>
        <dbReference type="ChEBI" id="CHEBI:74480"/>
        <dbReference type="EC" id="2.1.1.33"/>
    </reaction>
</comment>
<comment type="pathway">
    <text evidence="2">tRNA modification; N(7)-methylguanine-tRNA biosynthesis.</text>
</comment>
<comment type="similarity">
    <text evidence="2">Belongs to the class I-like SAM-binding methyltransferase superfamily. TrmB family.</text>
</comment>
<sequence length="253" mass="28129">MSQTPMPQPDQAPPVDVGQPVDEAEAKRRRFKTHGRKKGKVNDTRLARIEAGLLALSLPPGSADRGALIDQLGGNGQSQRVILEIGFGNGETLAALAARHPEDCFIGIDVFLEGFGTLLNRLTRGDISNVRLVCQNALQVLLERIPDASLDGVIINFPDPWRKKRHFKRRIVQTEFLDALAPKMRSGADLTLATDWANYAEWMVAHLEPHTAFVNQAEPGPFAAPPPWWIETNFERKGVAAGRIIRHLHYKKR</sequence>
<dbReference type="EC" id="2.1.1.33" evidence="2"/>
<dbReference type="EMBL" id="CP000471">
    <property type="protein sequence ID" value="ABK42931.1"/>
    <property type="molecule type" value="Genomic_DNA"/>
</dbReference>
<dbReference type="RefSeq" id="WP_011712101.1">
    <property type="nucleotide sequence ID" value="NC_008576.1"/>
</dbReference>
<dbReference type="SMR" id="A0L4N8"/>
<dbReference type="STRING" id="156889.Mmc1_0405"/>
<dbReference type="KEGG" id="mgm:Mmc1_0405"/>
<dbReference type="eggNOG" id="COG0220">
    <property type="taxonomic scope" value="Bacteria"/>
</dbReference>
<dbReference type="HOGENOM" id="CLU_050910_0_1_5"/>
<dbReference type="OrthoDB" id="9802090at2"/>
<dbReference type="UniPathway" id="UPA00989"/>
<dbReference type="Proteomes" id="UP000002586">
    <property type="component" value="Chromosome"/>
</dbReference>
<dbReference type="GO" id="GO:0043527">
    <property type="term" value="C:tRNA methyltransferase complex"/>
    <property type="evidence" value="ECO:0007669"/>
    <property type="project" value="TreeGrafter"/>
</dbReference>
<dbReference type="GO" id="GO:0008176">
    <property type="term" value="F:tRNA (guanine(46)-N7)-methyltransferase activity"/>
    <property type="evidence" value="ECO:0007669"/>
    <property type="project" value="UniProtKB-UniRule"/>
</dbReference>
<dbReference type="CDD" id="cd02440">
    <property type="entry name" value="AdoMet_MTases"/>
    <property type="match status" value="1"/>
</dbReference>
<dbReference type="Gene3D" id="3.40.50.150">
    <property type="entry name" value="Vaccinia Virus protein VP39"/>
    <property type="match status" value="1"/>
</dbReference>
<dbReference type="HAMAP" id="MF_01057">
    <property type="entry name" value="tRNA_methyltr_TrmB"/>
    <property type="match status" value="1"/>
</dbReference>
<dbReference type="InterPro" id="IPR029063">
    <property type="entry name" value="SAM-dependent_MTases_sf"/>
</dbReference>
<dbReference type="InterPro" id="IPR003358">
    <property type="entry name" value="tRNA_(Gua-N-7)_MeTrfase_Trmb"/>
</dbReference>
<dbReference type="InterPro" id="IPR055361">
    <property type="entry name" value="tRNA_methyltr_TrmB_bact"/>
</dbReference>
<dbReference type="NCBIfam" id="TIGR00091">
    <property type="entry name" value="tRNA (guanosine(46)-N7)-methyltransferase TrmB"/>
    <property type="match status" value="1"/>
</dbReference>
<dbReference type="PANTHER" id="PTHR23417">
    <property type="entry name" value="3-DEOXY-D-MANNO-OCTULOSONIC-ACID TRANSFERASE/TRNA GUANINE-N 7 - -METHYLTRANSFERASE"/>
    <property type="match status" value="1"/>
</dbReference>
<dbReference type="PANTHER" id="PTHR23417:SF14">
    <property type="entry name" value="PENTACOTRIPEPTIDE-REPEAT REGION OF PRORP DOMAIN-CONTAINING PROTEIN"/>
    <property type="match status" value="1"/>
</dbReference>
<dbReference type="Pfam" id="PF02390">
    <property type="entry name" value="Methyltransf_4"/>
    <property type="match status" value="1"/>
</dbReference>
<dbReference type="SUPFAM" id="SSF53335">
    <property type="entry name" value="S-adenosyl-L-methionine-dependent methyltransferases"/>
    <property type="match status" value="1"/>
</dbReference>
<dbReference type="PROSITE" id="PS51625">
    <property type="entry name" value="SAM_MT_TRMB"/>
    <property type="match status" value="1"/>
</dbReference>
<feature type="chain" id="PRO_0000288173" description="tRNA (guanine-N(7)-)-methyltransferase">
    <location>
        <begin position="1"/>
        <end position="253"/>
    </location>
</feature>
<feature type="region of interest" description="Disordered" evidence="3">
    <location>
        <begin position="1"/>
        <end position="39"/>
    </location>
</feature>
<feature type="compositionally biased region" description="Pro residues" evidence="3">
    <location>
        <begin position="1"/>
        <end position="12"/>
    </location>
</feature>
<feature type="compositionally biased region" description="Basic residues" evidence="3">
    <location>
        <begin position="27"/>
        <end position="39"/>
    </location>
</feature>
<feature type="active site" evidence="1">
    <location>
        <position position="159"/>
    </location>
</feature>
<feature type="binding site" evidence="2">
    <location>
        <position position="84"/>
    </location>
    <ligand>
        <name>S-adenosyl-L-methionine</name>
        <dbReference type="ChEBI" id="CHEBI:59789"/>
    </ligand>
</feature>
<feature type="binding site" evidence="2">
    <location>
        <position position="109"/>
    </location>
    <ligand>
        <name>S-adenosyl-L-methionine</name>
        <dbReference type="ChEBI" id="CHEBI:59789"/>
    </ligand>
</feature>
<feature type="binding site" evidence="2">
    <location>
        <position position="136"/>
    </location>
    <ligand>
        <name>S-adenosyl-L-methionine</name>
        <dbReference type="ChEBI" id="CHEBI:59789"/>
    </ligand>
</feature>
<feature type="binding site" evidence="2">
    <location>
        <position position="159"/>
    </location>
    <ligand>
        <name>S-adenosyl-L-methionine</name>
        <dbReference type="ChEBI" id="CHEBI:59789"/>
    </ligand>
</feature>
<feature type="binding site" evidence="2">
    <location>
        <position position="163"/>
    </location>
    <ligand>
        <name>substrate</name>
    </ligand>
</feature>
<feature type="binding site" evidence="2">
    <location>
        <position position="195"/>
    </location>
    <ligand>
        <name>substrate</name>
    </ligand>
</feature>
<feature type="binding site" evidence="2">
    <location>
        <begin position="232"/>
        <end position="235"/>
    </location>
    <ligand>
        <name>substrate</name>
    </ligand>
</feature>
<protein>
    <recommendedName>
        <fullName evidence="2">tRNA (guanine-N(7)-)-methyltransferase</fullName>
        <ecNumber evidence="2">2.1.1.33</ecNumber>
    </recommendedName>
    <alternativeName>
        <fullName evidence="2">tRNA (guanine(46)-N(7))-methyltransferase</fullName>
    </alternativeName>
    <alternativeName>
        <fullName evidence="2">tRNA(m7G46)-methyltransferase</fullName>
    </alternativeName>
</protein>
<proteinExistence type="inferred from homology"/>
<evidence type="ECO:0000250" key="1"/>
<evidence type="ECO:0000255" key="2">
    <source>
        <dbReference type="HAMAP-Rule" id="MF_01057"/>
    </source>
</evidence>
<evidence type="ECO:0000256" key="3">
    <source>
        <dbReference type="SAM" id="MobiDB-lite"/>
    </source>
</evidence>
<name>TRMB_MAGMM</name>
<gene>
    <name evidence="2" type="primary">trmB</name>
    <name type="ordered locus">Mmc1_0405</name>
</gene>
<accession>A0L4N8</accession>
<keyword id="KW-0489">Methyltransferase</keyword>
<keyword id="KW-1185">Reference proteome</keyword>
<keyword id="KW-0949">S-adenosyl-L-methionine</keyword>
<keyword id="KW-0808">Transferase</keyword>
<keyword id="KW-0819">tRNA processing</keyword>